<name>PXPA_CHLSY</name>
<protein>
    <recommendedName>
        <fullName evidence="1">5-oxoprolinase subunit A</fullName>
        <shortName evidence="1">5-OPase subunit A</shortName>
        <ecNumber evidence="1">3.5.2.9</ecNumber>
    </recommendedName>
    <alternativeName>
        <fullName evidence="1">5-oxoprolinase (ATP-hydrolyzing) subunit A</fullName>
    </alternativeName>
</protein>
<feature type="chain" id="PRO_1000200454" description="5-oxoprolinase subunit A">
    <location>
        <begin position="1"/>
        <end position="253"/>
    </location>
</feature>
<evidence type="ECO:0000255" key="1">
    <source>
        <dbReference type="HAMAP-Rule" id="MF_00691"/>
    </source>
</evidence>
<organism>
    <name type="scientific">Chloroflexus aurantiacus (strain ATCC 29364 / DSM 637 / Y-400-fl)</name>
    <dbReference type="NCBI Taxonomy" id="480224"/>
    <lineage>
        <taxon>Bacteria</taxon>
        <taxon>Bacillati</taxon>
        <taxon>Chloroflexota</taxon>
        <taxon>Chloroflexia</taxon>
        <taxon>Chloroflexales</taxon>
        <taxon>Chloroflexineae</taxon>
        <taxon>Chloroflexaceae</taxon>
        <taxon>Chloroflexus</taxon>
    </lineage>
</organism>
<dbReference type="EC" id="3.5.2.9" evidence="1"/>
<dbReference type="EMBL" id="CP001364">
    <property type="protein sequence ID" value="ACM52855.1"/>
    <property type="molecule type" value="Genomic_DNA"/>
</dbReference>
<dbReference type="SMR" id="B9LC61"/>
<dbReference type="KEGG" id="chl:Chy400_1437"/>
<dbReference type="HOGENOM" id="CLU_069535_0_0_0"/>
<dbReference type="OrthoDB" id="9773478at2"/>
<dbReference type="GO" id="GO:0017168">
    <property type="term" value="F:5-oxoprolinase (ATP-hydrolyzing) activity"/>
    <property type="evidence" value="ECO:0007669"/>
    <property type="project" value="UniProtKB-UniRule"/>
</dbReference>
<dbReference type="GO" id="GO:0005524">
    <property type="term" value="F:ATP binding"/>
    <property type="evidence" value="ECO:0007669"/>
    <property type="project" value="UniProtKB-UniRule"/>
</dbReference>
<dbReference type="GO" id="GO:0005975">
    <property type="term" value="P:carbohydrate metabolic process"/>
    <property type="evidence" value="ECO:0007669"/>
    <property type="project" value="InterPro"/>
</dbReference>
<dbReference type="CDD" id="cd10787">
    <property type="entry name" value="LamB_YcsF_like"/>
    <property type="match status" value="1"/>
</dbReference>
<dbReference type="Gene3D" id="3.20.20.370">
    <property type="entry name" value="Glycoside hydrolase/deacetylase"/>
    <property type="match status" value="1"/>
</dbReference>
<dbReference type="HAMAP" id="MF_00691">
    <property type="entry name" value="PxpA"/>
    <property type="match status" value="1"/>
</dbReference>
<dbReference type="InterPro" id="IPR011330">
    <property type="entry name" value="Glyco_hydro/deAcase_b/a-brl"/>
</dbReference>
<dbReference type="InterPro" id="IPR005501">
    <property type="entry name" value="LamB/YcsF/PxpA-like"/>
</dbReference>
<dbReference type="NCBIfam" id="NF003814">
    <property type="entry name" value="PRK05406.1-3"/>
    <property type="match status" value="1"/>
</dbReference>
<dbReference type="NCBIfam" id="NF003816">
    <property type="entry name" value="PRK05406.1-5"/>
    <property type="match status" value="1"/>
</dbReference>
<dbReference type="PANTHER" id="PTHR30292:SF0">
    <property type="entry name" value="5-OXOPROLINASE SUBUNIT A"/>
    <property type="match status" value="1"/>
</dbReference>
<dbReference type="PANTHER" id="PTHR30292">
    <property type="entry name" value="UNCHARACTERIZED PROTEIN YBGL-RELATED"/>
    <property type="match status" value="1"/>
</dbReference>
<dbReference type="Pfam" id="PF03746">
    <property type="entry name" value="LamB_YcsF"/>
    <property type="match status" value="1"/>
</dbReference>
<dbReference type="SUPFAM" id="SSF88713">
    <property type="entry name" value="Glycoside hydrolase/deacetylase"/>
    <property type="match status" value="1"/>
</dbReference>
<keyword id="KW-0067">ATP-binding</keyword>
<keyword id="KW-0378">Hydrolase</keyword>
<keyword id="KW-0547">Nucleotide-binding</keyword>
<reference key="1">
    <citation type="submission" date="2009-01" db="EMBL/GenBank/DDBJ databases">
        <title>Complete sequence of Chloroflexus sp. Y-400-fl.</title>
        <authorList>
            <consortium name="US DOE Joint Genome Institute"/>
            <person name="Lucas S."/>
            <person name="Copeland A."/>
            <person name="Lapidus A."/>
            <person name="Glavina del Rio T."/>
            <person name="Dalin E."/>
            <person name="Tice H."/>
            <person name="Bruce D."/>
            <person name="Goodwin L."/>
            <person name="Pitluck S."/>
            <person name="Sims D."/>
            <person name="Kiss H."/>
            <person name="Brettin T."/>
            <person name="Detter J.C."/>
            <person name="Han C."/>
            <person name="Larimer F."/>
            <person name="Land M."/>
            <person name="Hauser L."/>
            <person name="Kyrpides N."/>
            <person name="Ovchinnikova G."/>
            <person name="Bryant D.A."/>
            <person name="Richardson P."/>
        </authorList>
    </citation>
    <scope>NUCLEOTIDE SEQUENCE [LARGE SCALE GENOMIC DNA]</scope>
    <source>
        <strain>ATCC 29364 / DSM 637 / Y-400-fl</strain>
    </source>
</reference>
<gene>
    <name evidence="1" type="primary">pxpA</name>
    <name type="ordered locus">Chy400_1437</name>
</gene>
<accession>B9LC61</accession>
<comment type="function">
    <text evidence="1">Catalyzes the cleavage of 5-oxoproline to form L-glutamate coupled to the hydrolysis of ATP to ADP and inorganic phosphate.</text>
</comment>
<comment type="catalytic activity">
    <reaction evidence="1">
        <text>5-oxo-L-proline + ATP + 2 H2O = L-glutamate + ADP + phosphate + H(+)</text>
        <dbReference type="Rhea" id="RHEA:10348"/>
        <dbReference type="ChEBI" id="CHEBI:15377"/>
        <dbReference type="ChEBI" id="CHEBI:15378"/>
        <dbReference type="ChEBI" id="CHEBI:29985"/>
        <dbReference type="ChEBI" id="CHEBI:30616"/>
        <dbReference type="ChEBI" id="CHEBI:43474"/>
        <dbReference type="ChEBI" id="CHEBI:58402"/>
        <dbReference type="ChEBI" id="CHEBI:456216"/>
        <dbReference type="EC" id="3.5.2.9"/>
    </reaction>
</comment>
<comment type="subunit">
    <text evidence="1">Forms a complex composed of PxpA, PxpB and PxpC.</text>
</comment>
<comment type="similarity">
    <text evidence="1">Belongs to the LamB/PxpA family.</text>
</comment>
<sequence length="253" mass="26535">MLTIDINCDCGESYGAFQVGDDDGILPFVSSANVACGGHAGDPMVMRRTVRRCRDLGVAVGAHPSYPDLYGFGRRVLPLTPDEIEAWVLTQIGSLAAIARSEKVELRHVKPHGALYNVAARDLTVAMAIARAVAAFSRELALVGLAGSLLITAGHEVGVPVLAEAFADRTYEADGTLRNRHHPDALIIDPAACLAQTLHIIRDGAVRAVDGTLVPLQAATICIHGDTPGAALRAATIRQGLAAAGITVQAPQR</sequence>
<proteinExistence type="inferred from homology"/>